<comment type="function">
    <text evidence="1">This enzyme scavenges exogenous and endogenous cytidine and 2'-deoxycytidine for UMP synthesis.</text>
</comment>
<comment type="catalytic activity">
    <reaction evidence="1">
        <text>cytidine + H2O + H(+) = uridine + NH4(+)</text>
        <dbReference type="Rhea" id="RHEA:16069"/>
        <dbReference type="ChEBI" id="CHEBI:15377"/>
        <dbReference type="ChEBI" id="CHEBI:15378"/>
        <dbReference type="ChEBI" id="CHEBI:16704"/>
        <dbReference type="ChEBI" id="CHEBI:17562"/>
        <dbReference type="ChEBI" id="CHEBI:28938"/>
        <dbReference type="EC" id="3.5.4.5"/>
    </reaction>
</comment>
<comment type="catalytic activity">
    <reaction evidence="1">
        <text>2'-deoxycytidine + H2O + H(+) = 2'-deoxyuridine + NH4(+)</text>
        <dbReference type="Rhea" id="RHEA:13433"/>
        <dbReference type="ChEBI" id="CHEBI:15377"/>
        <dbReference type="ChEBI" id="CHEBI:15378"/>
        <dbReference type="ChEBI" id="CHEBI:15698"/>
        <dbReference type="ChEBI" id="CHEBI:16450"/>
        <dbReference type="ChEBI" id="CHEBI:28938"/>
        <dbReference type="EC" id="3.5.4.5"/>
    </reaction>
</comment>
<comment type="cofactor">
    <cofactor evidence="1">
        <name>Zn(2+)</name>
        <dbReference type="ChEBI" id="CHEBI:29105"/>
    </cofactor>
    <text evidence="1">Binds 1 zinc ion.</text>
</comment>
<comment type="subunit">
    <text evidence="1">Homodimer.</text>
</comment>
<comment type="similarity">
    <text evidence="1">Belongs to the cytidine and deoxycytidylate deaminase family.</text>
</comment>
<organism>
    <name type="scientific">Shigella boydii serotype 4 (strain Sb227)</name>
    <dbReference type="NCBI Taxonomy" id="300268"/>
    <lineage>
        <taxon>Bacteria</taxon>
        <taxon>Pseudomonadati</taxon>
        <taxon>Pseudomonadota</taxon>
        <taxon>Gammaproteobacteria</taxon>
        <taxon>Enterobacterales</taxon>
        <taxon>Enterobacteriaceae</taxon>
        <taxon>Shigella</taxon>
    </lineage>
</organism>
<dbReference type="EC" id="3.5.4.5" evidence="1"/>
<dbReference type="EMBL" id="CP000036">
    <property type="protein sequence ID" value="ABB65655.1"/>
    <property type="molecule type" value="Genomic_DNA"/>
</dbReference>
<dbReference type="RefSeq" id="WP_000553555.1">
    <property type="nucleotide sequence ID" value="NC_007613.1"/>
</dbReference>
<dbReference type="SMR" id="Q322V3"/>
<dbReference type="GeneID" id="93775039"/>
<dbReference type="KEGG" id="sbo:SBO_0998"/>
<dbReference type="HOGENOM" id="CLU_052424_0_0_6"/>
<dbReference type="Proteomes" id="UP000007067">
    <property type="component" value="Chromosome"/>
</dbReference>
<dbReference type="GO" id="GO:0005829">
    <property type="term" value="C:cytosol"/>
    <property type="evidence" value="ECO:0007669"/>
    <property type="project" value="TreeGrafter"/>
</dbReference>
<dbReference type="GO" id="GO:0004126">
    <property type="term" value="F:cytidine deaminase activity"/>
    <property type="evidence" value="ECO:0007669"/>
    <property type="project" value="UniProtKB-UniRule"/>
</dbReference>
<dbReference type="GO" id="GO:0042802">
    <property type="term" value="F:identical protein binding"/>
    <property type="evidence" value="ECO:0007669"/>
    <property type="project" value="UniProtKB-ARBA"/>
</dbReference>
<dbReference type="GO" id="GO:0008270">
    <property type="term" value="F:zinc ion binding"/>
    <property type="evidence" value="ECO:0007669"/>
    <property type="project" value="UniProtKB-UniRule"/>
</dbReference>
<dbReference type="GO" id="GO:0009972">
    <property type="term" value="P:cytidine deamination"/>
    <property type="evidence" value="ECO:0007669"/>
    <property type="project" value="InterPro"/>
</dbReference>
<dbReference type="CDD" id="cd01283">
    <property type="entry name" value="cytidine_deaminase"/>
    <property type="match status" value="2"/>
</dbReference>
<dbReference type="FunFam" id="3.40.140.10:FF:000006">
    <property type="entry name" value="Cytidine deaminase"/>
    <property type="match status" value="1"/>
</dbReference>
<dbReference type="FunFam" id="3.40.140.10:FF:000007">
    <property type="entry name" value="Cytidine deaminase"/>
    <property type="match status" value="1"/>
</dbReference>
<dbReference type="Gene3D" id="3.40.140.10">
    <property type="entry name" value="Cytidine Deaminase, domain 2"/>
    <property type="match status" value="2"/>
</dbReference>
<dbReference type="HAMAP" id="MF_01558">
    <property type="entry name" value="Cyt_deam"/>
    <property type="match status" value="1"/>
</dbReference>
<dbReference type="InterPro" id="IPR016192">
    <property type="entry name" value="APOBEC/CMP_deaminase_Zn-bd"/>
</dbReference>
<dbReference type="InterPro" id="IPR002125">
    <property type="entry name" value="CMP_dCMP_dom"/>
</dbReference>
<dbReference type="InterPro" id="IPR013171">
    <property type="entry name" value="Cyd/dCyd_deaminase_Zn-bd"/>
</dbReference>
<dbReference type="InterPro" id="IPR050202">
    <property type="entry name" value="Cyt/Deoxycyt_deaminase"/>
</dbReference>
<dbReference type="InterPro" id="IPR006263">
    <property type="entry name" value="Cyt_deam_dimer"/>
</dbReference>
<dbReference type="InterPro" id="IPR016193">
    <property type="entry name" value="Cytidine_deaminase-like"/>
</dbReference>
<dbReference type="InterPro" id="IPR020797">
    <property type="entry name" value="Cytidine_deaminase_bacteria"/>
</dbReference>
<dbReference type="NCBIfam" id="TIGR01355">
    <property type="entry name" value="cyt_deam_dimer"/>
    <property type="match status" value="1"/>
</dbReference>
<dbReference type="NCBIfam" id="NF006537">
    <property type="entry name" value="PRK09027.1"/>
    <property type="match status" value="1"/>
</dbReference>
<dbReference type="PANTHER" id="PTHR11644">
    <property type="entry name" value="CYTIDINE DEAMINASE"/>
    <property type="match status" value="1"/>
</dbReference>
<dbReference type="PANTHER" id="PTHR11644:SF2">
    <property type="entry name" value="CYTIDINE DEAMINASE"/>
    <property type="match status" value="1"/>
</dbReference>
<dbReference type="Pfam" id="PF00383">
    <property type="entry name" value="dCMP_cyt_deam_1"/>
    <property type="match status" value="1"/>
</dbReference>
<dbReference type="Pfam" id="PF08211">
    <property type="entry name" value="dCMP_cyt_deam_2"/>
    <property type="match status" value="1"/>
</dbReference>
<dbReference type="PIRSF" id="PIRSF006334">
    <property type="entry name" value="Cdd_plus_pseudo"/>
    <property type="match status" value="1"/>
</dbReference>
<dbReference type="SUPFAM" id="SSF53927">
    <property type="entry name" value="Cytidine deaminase-like"/>
    <property type="match status" value="2"/>
</dbReference>
<dbReference type="PROSITE" id="PS00903">
    <property type="entry name" value="CYT_DCMP_DEAMINASES_1"/>
    <property type="match status" value="1"/>
</dbReference>
<dbReference type="PROSITE" id="PS51747">
    <property type="entry name" value="CYT_DCMP_DEAMINASES_2"/>
    <property type="match status" value="2"/>
</dbReference>
<reference key="1">
    <citation type="journal article" date="2005" name="Nucleic Acids Res.">
        <title>Genome dynamics and diversity of Shigella species, the etiologic agents of bacillary dysentery.</title>
        <authorList>
            <person name="Yang F."/>
            <person name="Yang J."/>
            <person name="Zhang X."/>
            <person name="Chen L."/>
            <person name="Jiang Y."/>
            <person name="Yan Y."/>
            <person name="Tang X."/>
            <person name="Wang J."/>
            <person name="Xiong Z."/>
            <person name="Dong J."/>
            <person name="Xue Y."/>
            <person name="Zhu Y."/>
            <person name="Xu X."/>
            <person name="Sun L."/>
            <person name="Chen S."/>
            <person name="Nie H."/>
            <person name="Peng J."/>
            <person name="Xu J."/>
            <person name="Wang Y."/>
            <person name="Yuan Z."/>
            <person name="Wen Y."/>
            <person name="Yao Z."/>
            <person name="Shen Y."/>
            <person name="Qiang B."/>
            <person name="Hou Y."/>
            <person name="Yu J."/>
            <person name="Jin Q."/>
        </authorList>
    </citation>
    <scope>NUCLEOTIDE SEQUENCE [LARGE SCALE GENOMIC DNA]</scope>
    <source>
        <strain>Sb227</strain>
    </source>
</reference>
<feature type="chain" id="PRO_0000171665" description="Cytidine deaminase">
    <location>
        <begin position="1"/>
        <end position="294"/>
    </location>
</feature>
<feature type="domain" description="CMP/dCMP-type deaminase 1" evidence="2">
    <location>
        <begin position="48"/>
        <end position="168"/>
    </location>
</feature>
<feature type="domain" description="CMP/dCMP-type deaminase 2" evidence="2">
    <location>
        <begin position="186"/>
        <end position="294"/>
    </location>
</feature>
<feature type="active site" description="Proton donor" evidence="1">
    <location>
        <position position="104"/>
    </location>
</feature>
<feature type="binding site" evidence="1">
    <location>
        <begin position="89"/>
        <end position="91"/>
    </location>
    <ligand>
        <name>substrate</name>
    </ligand>
</feature>
<feature type="binding site" evidence="1">
    <location>
        <position position="102"/>
    </location>
    <ligand>
        <name>Zn(2+)</name>
        <dbReference type="ChEBI" id="CHEBI:29105"/>
        <note>catalytic</note>
    </ligand>
</feature>
<feature type="binding site" evidence="1">
    <location>
        <position position="129"/>
    </location>
    <ligand>
        <name>Zn(2+)</name>
        <dbReference type="ChEBI" id="CHEBI:29105"/>
        <note>catalytic</note>
    </ligand>
</feature>
<feature type="binding site" evidence="1">
    <location>
        <position position="132"/>
    </location>
    <ligand>
        <name>Zn(2+)</name>
        <dbReference type="ChEBI" id="CHEBI:29105"/>
        <note>catalytic</note>
    </ligand>
</feature>
<sequence length="294" mass="31540">MHPRFQTAFAQLADNLQSALEPILADKYFPALLTGEQVSSLKSATGLDEDALAFALLPLAAACARTPLSNFNVGAIARGVSGTWYFGANMEFIGATMQQTVHAEQSAISHAWLSGEKALAAITVNYTPCGHCRQFMNELNSGLDLRIHLPGREAHALRDYLPDAFGPKDLEIKTLLMDEQDHGYALTGDALSQAAIAAANRSHMPYSKSPSGVALECKDGRIFSGSYAENAAFNPTLPPLQGALILLNLKGYDYPDIQRAVLAEKADAPLIQWDATSATLKALGCHSIDRVLLA</sequence>
<accession>Q322V3</accession>
<protein>
    <recommendedName>
        <fullName evidence="1">Cytidine deaminase</fullName>
        <ecNumber evidence="1">3.5.4.5</ecNumber>
    </recommendedName>
    <alternativeName>
        <fullName evidence="1">Cytidine aminohydrolase</fullName>
        <shortName evidence="1">CDA</shortName>
    </alternativeName>
</protein>
<proteinExistence type="inferred from homology"/>
<evidence type="ECO:0000255" key="1">
    <source>
        <dbReference type="HAMAP-Rule" id="MF_01558"/>
    </source>
</evidence>
<evidence type="ECO:0000255" key="2">
    <source>
        <dbReference type="PROSITE-ProRule" id="PRU01083"/>
    </source>
</evidence>
<gene>
    <name evidence="1" type="primary">cdd</name>
    <name type="ordered locus">SBO_0998</name>
</gene>
<name>CDD_SHIBS</name>
<keyword id="KW-0378">Hydrolase</keyword>
<keyword id="KW-0479">Metal-binding</keyword>
<keyword id="KW-0862">Zinc</keyword>